<comment type="similarity">
    <text evidence="1">Belongs to the UPF0235 family.</text>
</comment>
<organism>
    <name type="scientific">Pseudomonas fluorescens (strain Pf0-1)</name>
    <dbReference type="NCBI Taxonomy" id="205922"/>
    <lineage>
        <taxon>Bacteria</taxon>
        <taxon>Pseudomonadati</taxon>
        <taxon>Pseudomonadota</taxon>
        <taxon>Gammaproteobacteria</taxon>
        <taxon>Pseudomonadales</taxon>
        <taxon>Pseudomonadaceae</taxon>
        <taxon>Pseudomonas</taxon>
    </lineage>
</organism>
<dbReference type="EMBL" id="CP000094">
    <property type="protein sequence ID" value="ABA77059.1"/>
    <property type="molecule type" value="Genomic_DNA"/>
</dbReference>
<dbReference type="RefSeq" id="WP_011336375.1">
    <property type="nucleotide sequence ID" value="NC_007492.2"/>
</dbReference>
<dbReference type="SMR" id="Q3K595"/>
<dbReference type="KEGG" id="pfo:Pfl01_5322"/>
<dbReference type="eggNOG" id="COG1872">
    <property type="taxonomic scope" value="Bacteria"/>
</dbReference>
<dbReference type="HOGENOM" id="CLU_130694_5_0_6"/>
<dbReference type="Proteomes" id="UP000002704">
    <property type="component" value="Chromosome"/>
</dbReference>
<dbReference type="GO" id="GO:0005737">
    <property type="term" value="C:cytoplasm"/>
    <property type="evidence" value="ECO:0007669"/>
    <property type="project" value="TreeGrafter"/>
</dbReference>
<dbReference type="Gene3D" id="3.30.1200.10">
    <property type="entry name" value="YggU-like"/>
    <property type="match status" value="1"/>
</dbReference>
<dbReference type="HAMAP" id="MF_00634">
    <property type="entry name" value="UPF0235"/>
    <property type="match status" value="1"/>
</dbReference>
<dbReference type="InterPro" id="IPR003746">
    <property type="entry name" value="DUF167"/>
</dbReference>
<dbReference type="InterPro" id="IPR036591">
    <property type="entry name" value="YggU-like_sf"/>
</dbReference>
<dbReference type="NCBIfam" id="TIGR00251">
    <property type="entry name" value="DUF167 family protein"/>
    <property type="match status" value="1"/>
</dbReference>
<dbReference type="PANTHER" id="PTHR13420">
    <property type="entry name" value="UPF0235 PROTEIN C15ORF40"/>
    <property type="match status" value="1"/>
</dbReference>
<dbReference type="PANTHER" id="PTHR13420:SF7">
    <property type="entry name" value="UPF0235 PROTEIN C15ORF40"/>
    <property type="match status" value="1"/>
</dbReference>
<dbReference type="Pfam" id="PF02594">
    <property type="entry name" value="DUF167"/>
    <property type="match status" value="1"/>
</dbReference>
<dbReference type="SMART" id="SM01152">
    <property type="entry name" value="DUF167"/>
    <property type="match status" value="1"/>
</dbReference>
<dbReference type="SUPFAM" id="SSF69786">
    <property type="entry name" value="YggU-like"/>
    <property type="match status" value="1"/>
</dbReference>
<gene>
    <name type="ordered locus">Pfl01_5322</name>
</gene>
<reference key="1">
    <citation type="journal article" date="2009" name="Genome Biol.">
        <title>Genomic and genetic analyses of diversity and plant interactions of Pseudomonas fluorescens.</title>
        <authorList>
            <person name="Silby M.W."/>
            <person name="Cerdeno-Tarraga A.M."/>
            <person name="Vernikos G.S."/>
            <person name="Giddens S.R."/>
            <person name="Jackson R.W."/>
            <person name="Preston G.M."/>
            <person name="Zhang X.-X."/>
            <person name="Moon C.D."/>
            <person name="Gehrig S.M."/>
            <person name="Godfrey S.A.C."/>
            <person name="Knight C.G."/>
            <person name="Malone J.G."/>
            <person name="Robinson Z."/>
            <person name="Spiers A.J."/>
            <person name="Harris S."/>
            <person name="Challis G.L."/>
            <person name="Yaxley A.M."/>
            <person name="Harris D."/>
            <person name="Seeger K."/>
            <person name="Murphy L."/>
            <person name="Rutter S."/>
            <person name="Squares R."/>
            <person name="Quail M.A."/>
            <person name="Saunders E."/>
            <person name="Mavromatis K."/>
            <person name="Brettin T.S."/>
            <person name="Bentley S.D."/>
            <person name="Hothersall J."/>
            <person name="Stephens E."/>
            <person name="Thomas C.M."/>
            <person name="Parkhill J."/>
            <person name="Levy S.B."/>
            <person name="Rainey P.B."/>
            <person name="Thomson N.R."/>
        </authorList>
    </citation>
    <scope>NUCLEOTIDE SEQUENCE [LARGE SCALE GENOMIC DNA]</scope>
    <source>
        <strain>Pf0-1</strain>
    </source>
</reference>
<feature type="chain" id="PRO_1000072672" description="UPF0235 protein Pfl01_5322">
    <location>
        <begin position="1"/>
        <end position="96"/>
    </location>
</feature>
<protein>
    <recommendedName>
        <fullName evidence="1">UPF0235 protein Pfl01_5322</fullName>
    </recommendedName>
</protein>
<name>Y5322_PSEPF</name>
<evidence type="ECO:0000255" key="1">
    <source>
        <dbReference type="HAMAP-Rule" id="MF_00634"/>
    </source>
</evidence>
<accession>Q3K595</accession>
<proteinExistence type="inferred from homology"/>
<sequence length="96" mass="10646">MSWFRWDGDDLILECHLQPAARSDDFCGLHGDRLKIRLTAPPVEGKANAYLMGFLAKAFGVSKSQVSLLSGELNRQKRVRIGAPKKLPDLPGLCRP</sequence>